<accession>P62515</accession>
<accession>P25216</accession>
<dbReference type="EMBL" id="M88301">
    <property type="protein sequence ID" value="AAA39962.1"/>
    <property type="molecule type" value="Genomic_DNA"/>
</dbReference>
<dbReference type="CCDS" id="CCDS30355.1"/>
<dbReference type="PIR" id="S31225">
    <property type="entry name" value="S31225"/>
</dbReference>
<dbReference type="RefSeq" id="NP_032927.1">
    <property type="nucleotide sequence ID" value="NM_008901.2"/>
</dbReference>
<dbReference type="SMR" id="P62515"/>
<dbReference type="BioGRID" id="202308">
    <property type="interactions" value="1"/>
</dbReference>
<dbReference type="FunCoup" id="P62515">
    <property type="interactions" value="990"/>
</dbReference>
<dbReference type="IntAct" id="P62515">
    <property type="interactions" value="1"/>
</dbReference>
<dbReference type="STRING" id="10090.ENSMUSP00000077354"/>
<dbReference type="iPTMnet" id="P62515"/>
<dbReference type="PhosphoSitePlus" id="P62515"/>
<dbReference type="PaxDb" id="10090-ENSMUSP00000077354"/>
<dbReference type="ProteomicsDB" id="289470"/>
<dbReference type="Antibodypedia" id="14273">
    <property type="antibodies" value="75 antibodies from 20 providers"/>
</dbReference>
<dbReference type="DNASU" id="18994"/>
<dbReference type="Ensembl" id="ENSMUST00000078229.5">
    <property type="protein sequence ID" value="ENSMUSP00000077354.4"/>
    <property type="gene ID" value="ENSMUSG00000056854.5"/>
</dbReference>
<dbReference type="GeneID" id="18994"/>
<dbReference type="KEGG" id="mmu:18994"/>
<dbReference type="UCSC" id="uc009ucv.1">
    <property type="organism name" value="mouse"/>
</dbReference>
<dbReference type="AGR" id="MGI:101894"/>
<dbReference type="CTD" id="5456"/>
<dbReference type="MGI" id="MGI:101894">
    <property type="gene designation" value="Pou3f4"/>
</dbReference>
<dbReference type="VEuPathDB" id="HostDB:ENSMUSG00000056854"/>
<dbReference type="eggNOG" id="KOG3802">
    <property type="taxonomic scope" value="Eukaryota"/>
</dbReference>
<dbReference type="GeneTree" id="ENSGT00940000161429"/>
<dbReference type="HOGENOM" id="CLU_013065_1_2_1"/>
<dbReference type="InParanoid" id="P62515"/>
<dbReference type="OMA" id="QHEVYSH"/>
<dbReference type="OrthoDB" id="6358449at2759"/>
<dbReference type="PhylomeDB" id="P62515"/>
<dbReference type="TreeFam" id="TF316413"/>
<dbReference type="BioGRID-ORCS" id="18994">
    <property type="hits" value="2 hits in 76 CRISPR screens"/>
</dbReference>
<dbReference type="PRO" id="PR:P62515"/>
<dbReference type="Proteomes" id="UP000000589">
    <property type="component" value="Chromosome X"/>
</dbReference>
<dbReference type="RNAct" id="P62515">
    <property type="molecule type" value="protein"/>
</dbReference>
<dbReference type="Bgee" id="ENSMUSG00000056854">
    <property type="expression patterns" value="Expressed in rostral migratory stream and 87 other cell types or tissues"/>
</dbReference>
<dbReference type="ExpressionAtlas" id="P62515">
    <property type="expression patterns" value="baseline and differential"/>
</dbReference>
<dbReference type="GO" id="GO:0005654">
    <property type="term" value="C:nucleoplasm"/>
    <property type="evidence" value="ECO:0007669"/>
    <property type="project" value="Ensembl"/>
</dbReference>
<dbReference type="GO" id="GO:0000981">
    <property type="term" value="F:DNA-binding transcription factor activity, RNA polymerase II-specific"/>
    <property type="evidence" value="ECO:0007669"/>
    <property type="project" value="InterPro"/>
</dbReference>
<dbReference type="GO" id="GO:0000977">
    <property type="term" value="F:RNA polymerase II transcription regulatory region sequence-specific DNA binding"/>
    <property type="evidence" value="ECO:0000314"/>
    <property type="project" value="NTNU_SB"/>
</dbReference>
<dbReference type="GO" id="GO:0043565">
    <property type="term" value="F:sequence-specific DNA binding"/>
    <property type="evidence" value="ECO:0000314"/>
    <property type="project" value="MGI"/>
</dbReference>
<dbReference type="GO" id="GO:0090103">
    <property type="term" value="P:cochlea morphogenesis"/>
    <property type="evidence" value="ECO:0000316"/>
    <property type="project" value="UniProtKB"/>
</dbReference>
<dbReference type="GO" id="GO:0021879">
    <property type="term" value="P:forebrain neuron differentiation"/>
    <property type="evidence" value="ECO:0000315"/>
    <property type="project" value="MGI"/>
</dbReference>
<dbReference type="GO" id="GO:0048839">
    <property type="term" value="P:inner ear development"/>
    <property type="evidence" value="ECO:0000315"/>
    <property type="project" value="MGI"/>
</dbReference>
<dbReference type="GO" id="GO:2001054">
    <property type="term" value="P:negative regulation of mesenchymal cell apoptotic process"/>
    <property type="evidence" value="ECO:0000316"/>
    <property type="project" value="UniProtKB"/>
</dbReference>
<dbReference type="GO" id="GO:0007605">
    <property type="term" value="P:sensory perception of sound"/>
    <property type="evidence" value="ECO:0000315"/>
    <property type="project" value="MGI"/>
</dbReference>
<dbReference type="CDD" id="cd00086">
    <property type="entry name" value="homeodomain"/>
    <property type="match status" value="1"/>
</dbReference>
<dbReference type="FunFam" id="1.10.10.60:FF:000005">
    <property type="entry name" value="POU domain protein"/>
    <property type="match status" value="1"/>
</dbReference>
<dbReference type="FunFam" id="1.10.260.40:FF:000001">
    <property type="entry name" value="POU domain protein"/>
    <property type="match status" value="1"/>
</dbReference>
<dbReference type="Gene3D" id="1.10.10.60">
    <property type="entry name" value="Homeodomain-like"/>
    <property type="match status" value="1"/>
</dbReference>
<dbReference type="Gene3D" id="1.10.260.40">
    <property type="entry name" value="lambda repressor-like DNA-binding domains"/>
    <property type="match status" value="1"/>
</dbReference>
<dbReference type="InterPro" id="IPR001356">
    <property type="entry name" value="HD"/>
</dbReference>
<dbReference type="InterPro" id="IPR017970">
    <property type="entry name" value="Homeobox_CS"/>
</dbReference>
<dbReference type="InterPro" id="IPR009057">
    <property type="entry name" value="Homeodomain-like_sf"/>
</dbReference>
<dbReference type="InterPro" id="IPR010982">
    <property type="entry name" value="Lambda_DNA-bd_dom_sf"/>
</dbReference>
<dbReference type="InterPro" id="IPR013847">
    <property type="entry name" value="POU"/>
</dbReference>
<dbReference type="InterPro" id="IPR000327">
    <property type="entry name" value="POU_dom"/>
</dbReference>
<dbReference type="InterPro" id="IPR050255">
    <property type="entry name" value="POU_domain_TF"/>
</dbReference>
<dbReference type="InterPro" id="IPR016362">
    <property type="entry name" value="TF_POU_3"/>
</dbReference>
<dbReference type="PANTHER" id="PTHR11636">
    <property type="entry name" value="POU DOMAIN"/>
    <property type="match status" value="1"/>
</dbReference>
<dbReference type="PANTHER" id="PTHR11636:SF83">
    <property type="entry name" value="POU DOMAIN, CLASS 3, TRANSCRIPTION FACTOR 4"/>
    <property type="match status" value="1"/>
</dbReference>
<dbReference type="Pfam" id="PF00046">
    <property type="entry name" value="Homeodomain"/>
    <property type="match status" value="1"/>
</dbReference>
<dbReference type="Pfam" id="PF00157">
    <property type="entry name" value="Pou"/>
    <property type="match status" value="1"/>
</dbReference>
<dbReference type="PIRSF" id="PIRSF002629">
    <property type="entry name" value="Transcription_factor_POU"/>
    <property type="match status" value="1"/>
</dbReference>
<dbReference type="PRINTS" id="PR00028">
    <property type="entry name" value="POUDOMAIN"/>
</dbReference>
<dbReference type="SMART" id="SM00389">
    <property type="entry name" value="HOX"/>
    <property type="match status" value="1"/>
</dbReference>
<dbReference type="SMART" id="SM00352">
    <property type="entry name" value="POU"/>
    <property type="match status" value="1"/>
</dbReference>
<dbReference type="SUPFAM" id="SSF46689">
    <property type="entry name" value="Homeodomain-like"/>
    <property type="match status" value="1"/>
</dbReference>
<dbReference type="SUPFAM" id="SSF47413">
    <property type="entry name" value="lambda repressor-like DNA-binding domains"/>
    <property type="match status" value="1"/>
</dbReference>
<dbReference type="PROSITE" id="PS00027">
    <property type="entry name" value="HOMEOBOX_1"/>
    <property type="match status" value="1"/>
</dbReference>
<dbReference type="PROSITE" id="PS50071">
    <property type="entry name" value="HOMEOBOX_2"/>
    <property type="match status" value="1"/>
</dbReference>
<dbReference type="PROSITE" id="PS00035">
    <property type="entry name" value="POU_1"/>
    <property type="match status" value="1"/>
</dbReference>
<dbReference type="PROSITE" id="PS00465">
    <property type="entry name" value="POU_2"/>
    <property type="match status" value="1"/>
</dbReference>
<dbReference type="PROSITE" id="PS51179">
    <property type="entry name" value="POU_3"/>
    <property type="match status" value="1"/>
</dbReference>
<sequence>MATAASNPYSILSSSSLVHADSAGMQQGSPFRNPQKLLQSDYLQGVPSNGHPLGHHWVTSLSDGGPWSSTLATSPLDQQDVKPGREDLQLGAIIHHRSPHVAHHSPHTNHPNAWGASPAPNSSITSSGQPLNVYSQPGFTVSGMLEHGGLTPPPAAASTQSLHPVLREPPDHGELGSHHCQDHSDEETPTSDELEQFAKQFKQRRIKLGFTQADVGLALGTLYGNVFSQTTICRFEALQLSFKNMCKLKPLLNKWLEEADSSTGSPTSIDKIAAQGRKRKKRTSIEVSVKGVLETHFLKCPKPAAQEISSLADSLQLEKEVVRVWFCNRRQKEKRMTPPGDQQPHEVYSHTVKTDASCHDL</sequence>
<comment type="function">
    <text>Probable transcription factor which exert its primary action widely during early neural development and in a very limited set of neurons in the mature brain.</text>
</comment>
<comment type="subunit">
    <text evidence="2">Interacts with HNRNPU.</text>
</comment>
<comment type="subcellular location">
    <subcellularLocation>
        <location>Nucleus</location>
    </subcellularLocation>
</comment>
<comment type="tissue specificity">
    <text>Brain specific.</text>
</comment>
<comment type="similarity">
    <text evidence="6">Belongs to the POU transcription factor family. Class-3 subfamily.</text>
</comment>
<feature type="chain" id="PRO_0000100734" description="POU domain, class 3, transcription factor 4">
    <location>
        <begin position="1"/>
        <end position="361"/>
    </location>
</feature>
<feature type="domain" description="POU-specific" evidence="4">
    <location>
        <begin position="186"/>
        <end position="260"/>
    </location>
</feature>
<feature type="DNA-binding region" description="Homeobox" evidence="3">
    <location>
        <begin position="278"/>
        <end position="337"/>
    </location>
</feature>
<feature type="region of interest" description="Disordered" evidence="5">
    <location>
        <begin position="99"/>
        <end position="131"/>
    </location>
</feature>
<feature type="region of interest" description="Disordered" evidence="5">
    <location>
        <begin position="144"/>
        <end position="192"/>
    </location>
</feature>
<feature type="region of interest" description="Disordered" evidence="5">
    <location>
        <begin position="334"/>
        <end position="361"/>
    </location>
</feature>
<feature type="compositionally biased region" description="Polar residues" evidence="5">
    <location>
        <begin position="119"/>
        <end position="131"/>
    </location>
</feature>
<feature type="compositionally biased region" description="Basic and acidic residues" evidence="5">
    <location>
        <begin position="165"/>
        <end position="183"/>
    </location>
</feature>
<feature type="compositionally biased region" description="Basic and acidic residues" evidence="5">
    <location>
        <begin position="343"/>
        <end position="361"/>
    </location>
</feature>
<feature type="modified residue" description="Phosphoserine" evidence="1">
    <location>
        <position position="265"/>
    </location>
</feature>
<gene>
    <name type="primary">Pou3f4</name>
    <name type="synonym">Brn-4</name>
    <name type="synonym">Brn4</name>
    <name type="synonym">Otf9</name>
</gene>
<reference key="1">
    <citation type="journal article" date="1992" name="Proc. Natl. Acad. Sci. U.S.A.">
        <title>Structure and evolution of four POU domain genes expressed in mouse brain.</title>
        <authorList>
            <person name="Hara Y."/>
            <person name="Rovescalli C."/>
            <person name="Kim Y."/>
            <person name="Nirenberg M."/>
        </authorList>
    </citation>
    <scope>NUCLEOTIDE SEQUENCE [GENOMIC DNA]</scope>
</reference>
<keyword id="KW-0238">DNA-binding</keyword>
<keyword id="KW-0371">Homeobox</keyword>
<keyword id="KW-0539">Nucleus</keyword>
<keyword id="KW-0597">Phosphoprotein</keyword>
<keyword id="KW-1185">Reference proteome</keyword>
<keyword id="KW-0804">Transcription</keyword>
<keyword id="KW-0805">Transcription regulation</keyword>
<evidence type="ECO:0000250" key="1">
    <source>
        <dbReference type="UniProtKB" id="P20265"/>
    </source>
</evidence>
<evidence type="ECO:0000250" key="2">
    <source>
        <dbReference type="UniProtKB" id="P49335"/>
    </source>
</evidence>
<evidence type="ECO:0000255" key="3">
    <source>
        <dbReference type="PROSITE-ProRule" id="PRU00108"/>
    </source>
</evidence>
<evidence type="ECO:0000255" key="4">
    <source>
        <dbReference type="PROSITE-ProRule" id="PRU00530"/>
    </source>
</evidence>
<evidence type="ECO:0000256" key="5">
    <source>
        <dbReference type="SAM" id="MobiDB-lite"/>
    </source>
</evidence>
<evidence type="ECO:0000305" key="6"/>
<name>PO3F4_MOUSE</name>
<organism>
    <name type="scientific">Mus musculus</name>
    <name type="common">Mouse</name>
    <dbReference type="NCBI Taxonomy" id="10090"/>
    <lineage>
        <taxon>Eukaryota</taxon>
        <taxon>Metazoa</taxon>
        <taxon>Chordata</taxon>
        <taxon>Craniata</taxon>
        <taxon>Vertebrata</taxon>
        <taxon>Euteleostomi</taxon>
        <taxon>Mammalia</taxon>
        <taxon>Eutheria</taxon>
        <taxon>Euarchontoglires</taxon>
        <taxon>Glires</taxon>
        <taxon>Rodentia</taxon>
        <taxon>Myomorpha</taxon>
        <taxon>Muroidea</taxon>
        <taxon>Muridae</taxon>
        <taxon>Murinae</taxon>
        <taxon>Mus</taxon>
        <taxon>Mus</taxon>
    </lineage>
</organism>
<protein>
    <recommendedName>
        <fullName>POU domain, class 3, transcription factor 4</fullName>
    </recommendedName>
    <alternativeName>
        <fullName>Brain-specific homeobox/POU domain protein 4</fullName>
        <shortName>Brain-4</shortName>
        <shortName>Brn-4</shortName>
    </alternativeName>
    <alternativeName>
        <fullName>Octamer-binding protein 9</fullName>
        <shortName>Oct-9</shortName>
    </alternativeName>
    <alternativeName>
        <fullName>Octamer-binding transcription factor 9</fullName>
        <shortName>OTF-9</shortName>
    </alternativeName>
</protein>
<proteinExistence type="evidence at transcript level"/>